<keyword id="KW-1185">Reference proteome</keyword>
<keyword id="KW-0687">Ribonucleoprotein</keyword>
<keyword id="KW-0689">Ribosomal protein</keyword>
<keyword id="KW-0694">RNA-binding</keyword>
<keyword id="KW-0699">rRNA-binding</keyword>
<evidence type="ECO:0000255" key="1">
    <source>
        <dbReference type="HAMAP-Rule" id="MF_01369"/>
    </source>
</evidence>
<evidence type="ECO:0000305" key="2"/>
<name>RL23_DESAL</name>
<gene>
    <name evidence="1" type="primary">rplW</name>
    <name type="ordered locus">Dalk_1913</name>
</gene>
<reference key="1">
    <citation type="journal article" date="2012" name="Environ. Microbiol.">
        <title>The genome sequence of Desulfatibacillum alkenivorans AK-01: a blueprint for anaerobic alkane oxidation.</title>
        <authorList>
            <person name="Callaghan A.V."/>
            <person name="Morris B.E."/>
            <person name="Pereira I.A."/>
            <person name="McInerney M.J."/>
            <person name="Austin R.N."/>
            <person name="Groves J.T."/>
            <person name="Kukor J.J."/>
            <person name="Suflita J.M."/>
            <person name="Young L.Y."/>
            <person name="Zylstra G.J."/>
            <person name="Wawrik B."/>
        </authorList>
    </citation>
    <scope>NUCLEOTIDE SEQUENCE [LARGE SCALE GENOMIC DNA]</scope>
    <source>
        <strain>AK-01</strain>
    </source>
</reference>
<organism>
    <name type="scientific">Desulfatibacillum aliphaticivorans</name>
    <dbReference type="NCBI Taxonomy" id="218208"/>
    <lineage>
        <taxon>Bacteria</taxon>
        <taxon>Pseudomonadati</taxon>
        <taxon>Thermodesulfobacteriota</taxon>
        <taxon>Desulfobacteria</taxon>
        <taxon>Desulfobacterales</taxon>
        <taxon>Desulfatibacillaceae</taxon>
        <taxon>Desulfatibacillum</taxon>
    </lineage>
</organism>
<protein>
    <recommendedName>
        <fullName evidence="1">Large ribosomal subunit protein uL23</fullName>
    </recommendedName>
    <alternativeName>
        <fullName evidence="2">50S ribosomal protein L23</fullName>
    </alternativeName>
</protein>
<proteinExistence type="inferred from homology"/>
<feature type="chain" id="PRO_1000144562" description="Large ribosomal subunit protein uL23">
    <location>
        <begin position="1"/>
        <end position="95"/>
    </location>
</feature>
<comment type="function">
    <text evidence="1">One of the early assembly proteins it binds 23S rRNA. One of the proteins that surrounds the polypeptide exit tunnel on the outside of the ribosome. Forms the main docking site for trigger factor binding to the ribosome.</text>
</comment>
<comment type="subunit">
    <text evidence="1">Part of the 50S ribosomal subunit. Contacts protein L29, and trigger factor when it is bound to the ribosome.</text>
</comment>
<comment type="similarity">
    <text evidence="1">Belongs to the universal ribosomal protein uL23 family.</text>
</comment>
<dbReference type="EMBL" id="CP001322">
    <property type="protein sequence ID" value="ACL03610.1"/>
    <property type="molecule type" value="Genomic_DNA"/>
</dbReference>
<dbReference type="RefSeq" id="WP_012611041.1">
    <property type="nucleotide sequence ID" value="NC_011768.1"/>
</dbReference>
<dbReference type="SMR" id="B8FET3"/>
<dbReference type="KEGG" id="dal:Dalk_1913"/>
<dbReference type="eggNOG" id="COG0089">
    <property type="taxonomic scope" value="Bacteria"/>
</dbReference>
<dbReference type="HOGENOM" id="CLU_037562_3_1_7"/>
<dbReference type="Proteomes" id="UP000000739">
    <property type="component" value="Chromosome"/>
</dbReference>
<dbReference type="GO" id="GO:1990904">
    <property type="term" value="C:ribonucleoprotein complex"/>
    <property type="evidence" value="ECO:0007669"/>
    <property type="project" value="UniProtKB-KW"/>
</dbReference>
<dbReference type="GO" id="GO:0005840">
    <property type="term" value="C:ribosome"/>
    <property type="evidence" value="ECO:0007669"/>
    <property type="project" value="UniProtKB-KW"/>
</dbReference>
<dbReference type="GO" id="GO:0019843">
    <property type="term" value="F:rRNA binding"/>
    <property type="evidence" value="ECO:0007669"/>
    <property type="project" value="UniProtKB-UniRule"/>
</dbReference>
<dbReference type="GO" id="GO:0003735">
    <property type="term" value="F:structural constituent of ribosome"/>
    <property type="evidence" value="ECO:0007669"/>
    <property type="project" value="InterPro"/>
</dbReference>
<dbReference type="GO" id="GO:0006412">
    <property type="term" value="P:translation"/>
    <property type="evidence" value="ECO:0007669"/>
    <property type="project" value="UniProtKB-UniRule"/>
</dbReference>
<dbReference type="FunFam" id="3.30.70.330:FF:000001">
    <property type="entry name" value="50S ribosomal protein L23"/>
    <property type="match status" value="1"/>
</dbReference>
<dbReference type="Gene3D" id="3.30.70.330">
    <property type="match status" value="1"/>
</dbReference>
<dbReference type="HAMAP" id="MF_01369_B">
    <property type="entry name" value="Ribosomal_uL23_B"/>
    <property type="match status" value="1"/>
</dbReference>
<dbReference type="InterPro" id="IPR012677">
    <property type="entry name" value="Nucleotide-bd_a/b_plait_sf"/>
</dbReference>
<dbReference type="InterPro" id="IPR013025">
    <property type="entry name" value="Ribosomal_uL23-like"/>
</dbReference>
<dbReference type="InterPro" id="IPR012678">
    <property type="entry name" value="Ribosomal_uL23/eL15/eS24_sf"/>
</dbReference>
<dbReference type="NCBIfam" id="NF004359">
    <property type="entry name" value="PRK05738.1-3"/>
    <property type="match status" value="1"/>
</dbReference>
<dbReference type="NCBIfam" id="NF004363">
    <property type="entry name" value="PRK05738.2-4"/>
    <property type="match status" value="1"/>
</dbReference>
<dbReference type="NCBIfam" id="NF004366">
    <property type="entry name" value="PRK05738.3-2"/>
    <property type="match status" value="1"/>
</dbReference>
<dbReference type="PANTHER" id="PTHR11620">
    <property type="entry name" value="60S RIBOSOMAL PROTEIN L23A"/>
    <property type="match status" value="1"/>
</dbReference>
<dbReference type="Pfam" id="PF00276">
    <property type="entry name" value="Ribosomal_L23"/>
    <property type="match status" value="1"/>
</dbReference>
<dbReference type="SUPFAM" id="SSF54189">
    <property type="entry name" value="Ribosomal proteins S24e, L23 and L15e"/>
    <property type="match status" value="1"/>
</dbReference>
<accession>B8FET3</accession>
<sequence>MNVYEIIRRPVVTEKSTIQKEENNQLTFEVDKKANKVEIARAIERIFKVKVLDVRTSTVNGKFKRRGKVLGKRRDWKKAMVTLAPGARIDFFDGV</sequence>